<protein>
    <recommendedName>
        <fullName evidence="1">Fatty acid oxidation complex subunit alpha</fullName>
    </recommendedName>
    <domain>
        <recommendedName>
            <fullName evidence="1">Enoyl-CoA hydratase/3-hydroxybutyryl-CoA epimerase</fullName>
            <ecNumber evidence="1">4.2.1.17</ecNumber>
            <ecNumber evidence="1">5.1.2.3</ecNumber>
        </recommendedName>
    </domain>
    <domain>
        <recommendedName>
            <fullName evidence="1">3-hydroxyacyl-CoA dehydrogenase</fullName>
            <ecNumber evidence="1">1.1.1.35</ecNumber>
        </recommendedName>
    </domain>
</protein>
<keyword id="KW-0963">Cytoplasm</keyword>
<keyword id="KW-0276">Fatty acid metabolism</keyword>
<keyword id="KW-0413">Isomerase</keyword>
<keyword id="KW-0442">Lipid degradation</keyword>
<keyword id="KW-0443">Lipid metabolism</keyword>
<keyword id="KW-0456">Lyase</keyword>
<keyword id="KW-0511">Multifunctional enzyme</keyword>
<keyword id="KW-0520">NAD</keyword>
<keyword id="KW-0560">Oxidoreductase</keyword>
<keyword id="KW-1185">Reference proteome</keyword>
<dbReference type="EC" id="4.2.1.17" evidence="1"/>
<dbReference type="EC" id="5.1.2.3" evidence="1"/>
<dbReference type="EC" id="1.1.1.35" evidence="1"/>
<dbReference type="EMBL" id="CP000507">
    <property type="protein sequence ID" value="ABM00373.1"/>
    <property type="molecule type" value="Genomic_DNA"/>
</dbReference>
<dbReference type="RefSeq" id="WP_011760280.1">
    <property type="nucleotide sequence ID" value="NC_008700.1"/>
</dbReference>
<dbReference type="SMR" id="A1S7L6"/>
<dbReference type="STRING" id="326297.Sama_2167"/>
<dbReference type="KEGG" id="saz:Sama_2167"/>
<dbReference type="eggNOG" id="COG1024">
    <property type="taxonomic scope" value="Bacteria"/>
</dbReference>
<dbReference type="eggNOG" id="COG1250">
    <property type="taxonomic scope" value="Bacteria"/>
</dbReference>
<dbReference type="HOGENOM" id="CLU_009834_16_1_6"/>
<dbReference type="OrthoDB" id="5389341at2"/>
<dbReference type="UniPathway" id="UPA00659"/>
<dbReference type="Proteomes" id="UP000009175">
    <property type="component" value="Chromosome"/>
</dbReference>
<dbReference type="GO" id="GO:0005737">
    <property type="term" value="C:cytoplasm"/>
    <property type="evidence" value="ECO:0007669"/>
    <property type="project" value="UniProtKB-SubCell"/>
</dbReference>
<dbReference type="GO" id="GO:0008692">
    <property type="term" value="F:3-hydroxybutyryl-CoA epimerase activity"/>
    <property type="evidence" value="ECO:0007669"/>
    <property type="project" value="UniProtKB-UniRule"/>
</dbReference>
<dbReference type="GO" id="GO:0004300">
    <property type="term" value="F:enoyl-CoA hydratase activity"/>
    <property type="evidence" value="ECO:0007669"/>
    <property type="project" value="UniProtKB-UniRule"/>
</dbReference>
<dbReference type="GO" id="GO:0016509">
    <property type="term" value="F:long-chain-3-hydroxyacyl-CoA dehydrogenase activity"/>
    <property type="evidence" value="ECO:0007669"/>
    <property type="project" value="TreeGrafter"/>
</dbReference>
<dbReference type="GO" id="GO:0070403">
    <property type="term" value="F:NAD+ binding"/>
    <property type="evidence" value="ECO:0007669"/>
    <property type="project" value="InterPro"/>
</dbReference>
<dbReference type="GO" id="GO:0006635">
    <property type="term" value="P:fatty acid beta-oxidation"/>
    <property type="evidence" value="ECO:0007669"/>
    <property type="project" value="UniProtKB-UniRule"/>
</dbReference>
<dbReference type="CDD" id="cd06558">
    <property type="entry name" value="crotonase-like"/>
    <property type="match status" value="1"/>
</dbReference>
<dbReference type="FunFam" id="3.90.226.10:FF:000011">
    <property type="entry name" value="Fatty acid oxidation complex subunit alpha"/>
    <property type="match status" value="1"/>
</dbReference>
<dbReference type="FunFam" id="3.40.50.720:FF:000009">
    <property type="entry name" value="Fatty oxidation complex, alpha subunit"/>
    <property type="match status" value="1"/>
</dbReference>
<dbReference type="Gene3D" id="1.10.1040.50">
    <property type="match status" value="1"/>
</dbReference>
<dbReference type="Gene3D" id="3.90.226.10">
    <property type="entry name" value="2-enoyl-CoA Hydratase, Chain A, domain 1"/>
    <property type="match status" value="1"/>
</dbReference>
<dbReference type="Gene3D" id="3.40.50.720">
    <property type="entry name" value="NAD(P)-binding Rossmann-like Domain"/>
    <property type="match status" value="1"/>
</dbReference>
<dbReference type="HAMAP" id="MF_01617">
    <property type="entry name" value="FadJ"/>
    <property type="match status" value="1"/>
</dbReference>
<dbReference type="InterPro" id="IPR006176">
    <property type="entry name" value="3-OHacyl-CoA_DH_NAD-bd"/>
</dbReference>
<dbReference type="InterPro" id="IPR006108">
    <property type="entry name" value="3HC_DH_C"/>
</dbReference>
<dbReference type="InterPro" id="IPR008927">
    <property type="entry name" value="6-PGluconate_DH-like_C_sf"/>
</dbReference>
<dbReference type="InterPro" id="IPR029045">
    <property type="entry name" value="ClpP/crotonase-like_dom_sf"/>
</dbReference>
<dbReference type="InterPro" id="IPR001753">
    <property type="entry name" value="Enoyl-CoA_hydra/iso"/>
</dbReference>
<dbReference type="InterPro" id="IPR050136">
    <property type="entry name" value="FA_oxidation_alpha_subunit"/>
</dbReference>
<dbReference type="InterPro" id="IPR012802">
    <property type="entry name" value="FadJ"/>
</dbReference>
<dbReference type="InterPro" id="IPR036291">
    <property type="entry name" value="NAD(P)-bd_dom_sf"/>
</dbReference>
<dbReference type="NCBIfam" id="TIGR02440">
    <property type="entry name" value="FadJ"/>
    <property type="match status" value="1"/>
</dbReference>
<dbReference type="NCBIfam" id="NF008363">
    <property type="entry name" value="PRK11154.1"/>
    <property type="match status" value="1"/>
</dbReference>
<dbReference type="PANTHER" id="PTHR43612">
    <property type="entry name" value="TRIFUNCTIONAL ENZYME SUBUNIT ALPHA"/>
    <property type="match status" value="1"/>
</dbReference>
<dbReference type="PANTHER" id="PTHR43612:SF3">
    <property type="entry name" value="TRIFUNCTIONAL ENZYME SUBUNIT ALPHA, MITOCHONDRIAL"/>
    <property type="match status" value="1"/>
</dbReference>
<dbReference type="Pfam" id="PF00725">
    <property type="entry name" value="3HCDH"/>
    <property type="match status" value="2"/>
</dbReference>
<dbReference type="Pfam" id="PF02737">
    <property type="entry name" value="3HCDH_N"/>
    <property type="match status" value="1"/>
</dbReference>
<dbReference type="Pfam" id="PF00378">
    <property type="entry name" value="ECH_1"/>
    <property type="match status" value="1"/>
</dbReference>
<dbReference type="SUPFAM" id="SSF48179">
    <property type="entry name" value="6-phosphogluconate dehydrogenase C-terminal domain-like"/>
    <property type="match status" value="2"/>
</dbReference>
<dbReference type="SUPFAM" id="SSF52096">
    <property type="entry name" value="ClpP/crotonase"/>
    <property type="match status" value="1"/>
</dbReference>
<dbReference type="SUPFAM" id="SSF51735">
    <property type="entry name" value="NAD(P)-binding Rossmann-fold domains"/>
    <property type="match status" value="1"/>
</dbReference>
<feature type="chain" id="PRO_0000323525" description="Fatty acid oxidation complex subunit alpha">
    <location>
        <begin position="1"/>
        <end position="706"/>
    </location>
</feature>
<feature type="region of interest" description="Enoyl-CoA hydratase" evidence="1">
    <location>
        <begin position="1"/>
        <end position="188"/>
    </location>
</feature>
<feature type="region of interest" description="3-hydroxyacyl-CoA dehydrogenase" evidence="1">
    <location>
        <begin position="308"/>
        <end position="706"/>
    </location>
</feature>
<feature type="site" description="Important for catalytic activity" evidence="1">
    <location>
        <position position="116"/>
    </location>
</feature>
<feature type="site" description="Important for catalytic activity" evidence="1">
    <location>
        <position position="138"/>
    </location>
</feature>
<gene>
    <name evidence="1" type="primary">fadJ</name>
    <name type="ordered locus">Sama_2167</name>
</gene>
<organism>
    <name type="scientific">Shewanella amazonensis (strain ATCC BAA-1098 / SB2B)</name>
    <dbReference type="NCBI Taxonomy" id="326297"/>
    <lineage>
        <taxon>Bacteria</taxon>
        <taxon>Pseudomonadati</taxon>
        <taxon>Pseudomonadota</taxon>
        <taxon>Gammaproteobacteria</taxon>
        <taxon>Alteromonadales</taxon>
        <taxon>Shewanellaceae</taxon>
        <taxon>Shewanella</taxon>
    </lineage>
</organism>
<evidence type="ECO:0000255" key="1">
    <source>
        <dbReference type="HAMAP-Rule" id="MF_01617"/>
    </source>
</evidence>
<accession>A1S7L6</accession>
<comment type="function">
    <text evidence="1">Catalyzes the formation of a hydroxyacyl-CoA by addition of water on enoyl-CoA. Also exhibits 3-hydroxyacyl-CoA epimerase and 3-hydroxyacyl-CoA dehydrogenase activities.</text>
</comment>
<comment type="catalytic activity">
    <reaction evidence="1">
        <text>a (3S)-3-hydroxyacyl-CoA = a (2E)-enoyl-CoA + H2O</text>
        <dbReference type="Rhea" id="RHEA:16105"/>
        <dbReference type="ChEBI" id="CHEBI:15377"/>
        <dbReference type="ChEBI" id="CHEBI:57318"/>
        <dbReference type="ChEBI" id="CHEBI:58856"/>
        <dbReference type="EC" id="4.2.1.17"/>
    </reaction>
</comment>
<comment type="catalytic activity">
    <reaction evidence="1">
        <text>a 4-saturated-(3S)-3-hydroxyacyl-CoA = a (3E)-enoyl-CoA + H2O</text>
        <dbReference type="Rhea" id="RHEA:20724"/>
        <dbReference type="ChEBI" id="CHEBI:15377"/>
        <dbReference type="ChEBI" id="CHEBI:58521"/>
        <dbReference type="ChEBI" id="CHEBI:137480"/>
        <dbReference type="EC" id="4.2.1.17"/>
    </reaction>
</comment>
<comment type="catalytic activity">
    <reaction evidence="1">
        <text>a (3S)-3-hydroxyacyl-CoA + NAD(+) = a 3-oxoacyl-CoA + NADH + H(+)</text>
        <dbReference type="Rhea" id="RHEA:22432"/>
        <dbReference type="ChEBI" id="CHEBI:15378"/>
        <dbReference type="ChEBI" id="CHEBI:57318"/>
        <dbReference type="ChEBI" id="CHEBI:57540"/>
        <dbReference type="ChEBI" id="CHEBI:57945"/>
        <dbReference type="ChEBI" id="CHEBI:90726"/>
        <dbReference type="EC" id="1.1.1.35"/>
    </reaction>
</comment>
<comment type="catalytic activity">
    <reaction evidence="1">
        <text>(3S)-3-hydroxybutanoyl-CoA = (3R)-3-hydroxybutanoyl-CoA</text>
        <dbReference type="Rhea" id="RHEA:21760"/>
        <dbReference type="ChEBI" id="CHEBI:57315"/>
        <dbReference type="ChEBI" id="CHEBI:57316"/>
        <dbReference type="EC" id="5.1.2.3"/>
    </reaction>
</comment>
<comment type="pathway">
    <text evidence="1">Lipid metabolism; fatty acid beta-oxidation.</text>
</comment>
<comment type="subunit">
    <text evidence="1">Heterotetramer of two alpha chains (FadJ) and two beta chains (FadI).</text>
</comment>
<comment type="subcellular location">
    <subcellularLocation>
        <location evidence="1">Cytoplasm</location>
    </subcellularLocation>
</comment>
<comment type="similarity">
    <text evidence="1">In the N-terminal section; belongs to the enoyl-CoA hydratase/isomerase family.</text>
</comment>
<comment type="similarity">
    <text evidence="1">In the central section; belongs to the 3-hydroxyacyl-CoA dehydrogenase family.</text>
</comment>
<sequence length="706" mass="75699">MEKTFSLSRRDDGIALLTMDVPGETMNTLKAQFAPEITAILQEIKADSSIKGLVLISGKADSFVAGADISMLDACETAEDARLLSRQGHHVFAELEGLNIPVVAAIHGACLGGGLELALACHQRVCSDSSKTMLGVPEVQLGLLPGGGGTQRLPRLIGIAKALDLMLTGKQVRPKQAVKMGLVDDVVPESILLDTAIEMALAGKKTRKPLKQPLVTKLLEGTPVGRNIMFDQATKQVLKKTQGNYPSPLKIIDCVREGMAKGMEKGLEVEAAHFGALVATPESAALRSIFFATTEMKKETGAGDAKPRKVAKAVVLGGGLMGGGIASVTTTKAKVPVRVKDISDKGLSNALGYAYKLLDKGVKRRHMTSAERDKLMALMTTTTEYRGVKDADIVVEAVFEDLNLKHQMVRDIERECGEHTIFASNTSSLPITQIAAAASRPENVIGLHYFSPVEKMPLVEVIAHEKTSPETIATTVAFARKQGKTPIVVKDCAGFYVNRILALYMNEAAQLLLEGQAVDHLDKALVKFGFPVGPMTLLDEVGIDVGAKISPILEKELGERFKAPAAFDKLMADDRKGRKNGKGFYLYGKAAKKGKKVDESVYSLLGLTPATGKEAGEIAERCVVQMLNEAVRCLEEGIIASPRDGDIGAIFGIGFPPFLGGPFRYMDTLGAAKMVRLLEGYQSKYGDRFAPAALLKAMAAEGKTFY</sequence>
<reference key="1">
    <citation type="submission" date="2006-12" db="EMBL/GenBank/DDBJ databases">
        <title>Complete sequence of Shewanella amazonensis SB2B.</title>
        <authorList>
            <consortium name="US DOE Joint Genome Institute"/>
            <person name="Copeland A."/>
            <person name="Lucas S."/>
            <person name="Lapidus A."/>
            <person name="Barry K."/>
            <person name="Detter J.C."/>
            <person name="Glavina del Rio T."/>
            <person name="Hammon N."/>
            <person name="Israni S."/>
            <person name="Dalin E."/>
            <person name="Tice H."/>
            <person name="Pitluck S."/>
            <person name="Munk A.C."/>
            <person name="Brettin T."/>
            <person name="Bruce D."/>
            <person name="Han C."/>
            <person name="Tapia R."/>
            <person name="Gilna P."/>
            <person name="Schmutz J."/>
            <person name="Larimer F."/>
            <person name="Land M."/>
            <person name="Hauser L."/>
            <person name="Kyrpides N."/>
            <person name="Mikhailova N."/>
            <person name="Fredrickson J."/>
            <person name="Richardson P."/>
        </authorList>
    </citation>
    <scope>NUCLEOTIDE SEQUENCE [LARGE SCALE GENOMIC DNA]</scope>
    <source>
        <strain>ATCC BAA-1098 / SB2B</strain>
    </source>
</reference>
<name>FADJ_SHEAM</name>
<proteinExistence type="inferred from homology"/>